<dbReference type="EMBL" id="AB237912">
    <property type="protein sequence ID" value="BAE46634.1"/>
    <property type="molecule type" value="Genomic_DNA"/>
</dbReference>
<dbReference type="RefSeq" id="YP_358659.1">
    <property type="nucleotide sequence ID" value="NC_007500.1"/>
</dbReference>
<dbReference type="SMR" id="Q3C1H2"/>
<dbReference type="GeneID" id="3735053"/>
<dbReference type="KEGG" id="nsy:3735053"/>
<dbReference type="OrthoDB" id="29500at4085"/>
<dbReference type="Proteomes" id="UP000189701">
    <property type="component" value="Chloroplast Pltd"/>
</dbReference>
<dbReference type="GO" id="GO:0009535">
    <property type="term" value="C:chloroplast thylakoid membrane"/>
    <property type="evidence" value="ECO:0007669"/>
    <property type="project" value="UniProtKB-SubCell"/>
</dbReference>
<dbReference type="GO" id="GO:0045259">
    <property type="term" value="C:proton-transporting ATP synthase complex"/>
    <property type="evidence" value="ECO:0007669"/>
    <property type="project" value="UniProtKB-KW"/>
</dbReference>
<dbReference type="GO" id="GO:0033177">
    <property type="term" value="C:proton-transporting two-sector ATPase complex, proton-transporting domain"/>
    <property type="evidence" value="ECO:0007669"/>
    <property type="project" value="InterPro"/>
</dbReference>
<dbReference type="GO" id="GO:0008289">
    <property type="term" value="F:lipid binding"/>
    <property type="evidence" value="ECO:0007669"/>
    <property type="project" value="UniProtKB-KW"/>
</dbReference>
<dbReference type="GO" id="GO:0046933">
    <property type="term" value="F:proton-transporting ATP synthase activity, rotational mechanism"/>
    <property type="evidence" value="ECO:0007669"/>
    <property type="project" value="UniProtKB-UniRule"/>
</dbReference>
<dbReference type="CDD" id="cd18183">
    <property type="entry name" value="ATP-synt_Fo_c_ATPH"/>
    <property type="match status" value="1"/>
</dbReference>
<dbReference type="FunFam" id="1.20.20.10:FF:000001">
    <property type="entry name" value="ATP synthase subunit c, chloroplastic"/>
    <property type="match status" value="1"/>
</dbReference>
<dbReference type="Gene3D" id="1.20.20.10">
    <property type="entry name" value="F1F0 ATP synthase subunit C"/>
    <property type="match status" value="1"/>
</dbReference>
<dbReference type="HAMAP" id="MF_01396">
    <property type="entry name" value="ATP_synth_c_bact"/>
    <property type="match status" value="1"/>
</dbReference>
<dbReference type="InterPro" id="IPR005953">
    <property type="entry name" value="ATP_synth_csu_bac/chlpt"/>
</dbReference>
<dbReference type="InterPro" id="IPR000454">
    <property type="entry name" value="ATP_synth_F0_csu"/>
</dbReference>
<dbReference type="InterPro" id="IPR020537">
    <property type="entry name" value="ATP_synth_F0_csu_DDCD_BS"/>
</dbReference>
<dbReference type="InterPro" id="IPR038662">
    <property type="entry name" value="ATP_synth_F0_csu_sf"/>
</dbReference>
<dbReference type="InterPro" id="IPR002379">
    <property type="entry name" value="ATPase_proteolipid_c-like_dom"/>
</dbReference>
<dbReference type="InterPro" id="IPR035921">
    <property type="entry name" value="F/V-ATP_Csub_sf"/>
</dbReference>
<dbReference type="NCBIfam" id="TIGR01260">
    <property type="entry name" value="ATP_synt_c"/>
    <property type="match status" value="1"/>
</dbReference>
<dbReference type="NCBIfam" id="NF005608">
    <property type="entry name" value="PRK07354.1"/>
    <property type="match status" value="1"/>
</dbReference>
<dbReference type="PANTHER" id="PTHR10031">
    <property type="entry name" value="ATP SYNTHASE LIPID-BINDING PROTEIN, MITOCHONDRIAL"/>
    <property type="match status" value="1"/>
</dbReference>
<dbReference type="PANTHER" id="PTHR10031:SF0">
    <property type="entry name" value="ATPASE PROTEIN 9"/>
    <property type="match status" value="1"/>
</dbReference>
<dbReference type="Pfam" id="PF00137">
    <property type="entry name" value="ATP-synt_C"/>
    <property type="match status" value="1"/>
</dbReference>
<dbReference type="PRINTS" id="PR00124">
    <property type="entry name" value="ATPASEC"/>
</dbReference>
<dbReference type="SUPFAM" id="SSF81333">
    <property type="entry name" value="F1F0 ATP synthase subunit C"/>
    <property type="match status" value="1"/>
</dbReference>
<dbReference type="PROSITE" id="PS00605">
    <property type="entry name" value="ATPASE_C"/>
    <property type="match status" value="1"/>
</dbReference>
<feature type="chain" id="PRO_0000362938" description="ATP synthase subunit c, chloroplastic">
    <location>
        <begin position="1"/>
        <end position="81"/>
    </location>
</feature>
<feature type="transmembrane region" description="Helical" evidence="1">
    <location>
        <begin position="3"/>
        <end position="23"/>
    </location>
</feature>
<feature type="transmembrane region" description="Helical" evidence="1">
    <location>
        <begin position="57"/>
        <end position="77"/>
    </location>
</feature>
<feature type="site" description="Reversibly protonated during proton transport" evidence="1">
    <location>
        <position position="61"/>
    </location>
</feature>
<protein>
    <recommendedName>
        <fullName evidence="1">ATP synthase subunit c, chloroplastic</fullName>
    </recommendedName>
    <alternativeName>
        <fullName evidence="1">ATP synthase F(0) sector subunit c</fullName>
    </alternativeName>
    <alternativeName>
        <fullName evidence="1">ATPase subunit III</fullName>
    </alternativeName>
    <alternativeName>
        <fullName evidence="1">F-type ATPase subunit c</fullName>
        <shortName evidence="1">F-ATPase subunit c</shortName>
    </alternativeName>
    <alternativeName>
        <fullName evidence="1">Lipid-binding protein</fullName>
    </alternativeName>
</protein>
<proteinExistence type="inferred from homology"/>
<keyword id="KW-0066">ATP synthesis</keyword>
<keyword id="KW-0138">CF(0)</keyword>
<keyword id="KW-0150">Chloroplast</keyword>
<keyword id="KW-0375">Hydrogen ion transport</keyword>
<keyword id="KW-0406">Ion transport</keyword>
<keyword id="KW-0446">Lipid-binding</keyword>
<keyword id="KW-0472">Membrane</keyword>
<keyword id="KW-0934">Plastid</keyword>
<keyword id="KW-1185">Reference proteome</keyword>
<keyword id="KW-0793">Thylakoid</keyword>
<keyword id="KW-0812">Transmembrane</keyword>
<keyword id="KW-1133">Transmembrane helix</keyword>
<keyword id="KW-0813">Transport</keyword>
<reference key="1">
    <citation type="journal article" date="2006" name="Mol. Genet. Genomics">
        <title>The chloroplast genome of Nicotiana sylvestris and Nicotiana tomentosiformis: complete sequencing confirms that the Nicotiana sylvestris progenitor is the maternal genome donor of Nicotiana tabacum.</title>
        <authorList>
            <person name="Yukawa M."/>
            <person name="Tsudzuki T."/>
            <person name="Sugiura M."/>
        </authorList>
    </citation>
    <scope>NUCLEOTIDE SEQUENCE [LARGE SCALE GENOMIC DNA]</scope>
</reference>
<organism>
    <name type="scientific">Nicotiana sylvestris</name>
    <name type="common">Wood tobacco</name>
    <name type="synonym">South American tobacco</name>
    <dbReference type="NCBI Taxonomy" id="4096"/>
    <lineage>
        <taxon>Eukaryota</taxon>
        <taxon>Viridiplantae</taxon>
        <taxon>Streptophyta</taxon>
        <taxon>Embryophyta</taxon>
        <taxon>Tracheophyta</taxon>
        <taxon>Spermatophyta</taxon>
        <taxon>Magnoliopsida</taxon>
        <taxon>eudicotyledons</taxon>
        <taxon>Gunneridae</taxon>
        <taxon>Pentapetalae</taxon>
        <taxon>asterids</taxon>
        <taxon>lamiids</taxon>
        <taxon>Solanales</taxon>
        <taxon>Solanaceae</taxon>
        <taxon>Nicotianoideae</taxon>
        <taxon>Nicotianeae</taxon>
        <taxon>Nicotiana</taxon>
    </lineage>
</organism>
<gene>
    <name evidence="1" type="primary">atpH</name>
</gene>
<comment type="function">
    <text evidence="1">F(1)F(0) ATP synthase produces ATP from ADP in the presence of a proton or sodium gradient. F-type ATPases consist of two structural domains, F(1) containing the extramembraneous catalytic core and F(0) containing the membrane proton channel, linked together by a central stalk and a peripheral stalk. During catalysis, ATP synthesis in the catalytic domain of F(1) is coupled via a rotary mechanism of the central stalk subunits to proton translocation.</text>
</comment>
<comment type="function">
    <text evidence="1">Key component of the F(0) channel; it plays a direct role in translocation across the membrane. A homomeric c-ring of between 10-14 subunits forms the central stalk rotor element with the F(1) delta and epsilon subunits.</text>
</comment>
<comment type="subunit">
    <text evidence="1">F-type ATPases have 2 components, F(1) - the catalytic core - and F(0) - the membrane proton channel. F(1) has five subunits: alpha(3), beta(3), gamma(1), delta(1), epsilon(1). F(0) has four main subunits: a(1), b(1), b'(1) and c(10-14). The alpha and beta chains form an alternating ring which encloses part of the gamma chain. F(1) is attached to F(0) by a central stalk formed by the gamma and epsilon chains, while a peripheral stalk is formed by the delta, b and b' chains.</text>
</comment>
<comment type="subcellular location">
    <subcellularLocation>
        <location evidence="1">Plastid</location>
        <location evidence="1">Chloroplast thylakoid membrane</location>
        <topology evidence="1">Multi-pass membrane protein</topology>
    </subcellularLocation>
</comment>
<comment type="miscellaneous">
    <text>In plastids the F-type ATPase is also known as CF(1)CF(0).</text>
</comment>
<comment type="similarity">
    <text evidence="1">Belongs to the ATPase C chain family.</text>
</comment>
<geneLocation type="chloroplast"/>
<name>ATPH_NICSY</name>
<accession>Q3C1H2</accession>
<sequence length="81" mass="7990">MNPLISAASVIAAGLAVGLASIGPGVGQGTAAGQAVEGIARQPEAEGKIRGTLLLSLAFMEALTIYGLVVALALLFANPFV</sequence>
<evidence type="ECO:0000255" key="1">
    <source>
        <dbReference type="HAMAP-Rule" id="MF_01396"/>
    </source>
</evidence>